<sequence length="68" mass="7949">MARGNQRDLARQKNLKKQKDMAKNQKKSGDPKKRMESDAEILRQKQAAADARREAEKLEKLKAEKTRR</sequence>
<name>YD85C_YEAST</name>
<keyword id="KW-0963">Cytoplasm</keyword>
<keyword id="KW-0539">Nucleus</keyword>
<keyword id="KW-0597">Phosphoprotein</keyword>
<keyword id="KW-1185">Reference proteome</keyword>
<dbReference type="EMBL" id="Z74134">
    <property type="status" value="NOT_ANNOTATED_CDS"/>
    <property type="molecule type" value="Genomic_DNA"/>
</dbReference>
<dbReference type="EMBL" id="BK006938">
    <property type="protein sequence ID" value="DAA11773.1"/>
    <property type="molecule type" value="Genomic_DNA"/>
</dbReference>
<dbReference type="RefSeq" id="NP_075208.1">
    <property type="nucleotide sequence ID" value="NM_001184455.1"/>
</dbReference>
<dbReference type="BioGRID" id="31975">
    <property type="interactions" value="27"/>
</dbReference>
<dbReference type="FunCoup" id="Q3E7B7">
    <property type="interactions" value="310"/>
</dbReference>
<dbReference type="IntAct" id="Q3E7B7">
    <property type="interactions" value="2"/>
</dbReference>
<dbReference type="MINT" id="Q3E7B7"/>
<dbReference type="STRING" id="4932.YDL085C-A"/>
<dbReference type="iPTMnet" id="Q3E7B7"/>
<dbReference type="PaxDb" id="4932-YDL085C-A"/>
<dbReference type="PeptideAtlas" id="Q3E7B7"/>
<dbReference type="TopDownProteomics" id="Q3E7B7"/>
<dbReference type="EnsemblFungi" id="YDL085C-A_mRNA">
    <property type="protein sequence ID" value="YDL085C-A"/>
    <property type="gene ID" value="YDL085C-A"/>
</dbReference>
<dbReference type="GeneID" id="851473"/>
<dbReference type="KEGG" id="sce:YDL085C-A"/>
<dbReference type="AGR" id="SGD:S000007588"/>
<dbReference type="SGD" id="S000007588">
    <property type="gene designation" value="YDL085C-A"/>
</dbReference>
<dbReference type="VEuPathDB" id="FungiDB:YDL085C-A"/>
<dbReference type="eggNOG" id="KOG4488">
    <property type="taxonomic scope" value="Eukaryota"/>
</dbReference>
<dbReference type="HOGENOM" id="CLU_165034_4_1_1"/>
<dbReference type="InParanoid" id="Q3E7B7"/>
<dbReference type="OMA" id="NRDADIM"/>
<dbReference type="BioCyc" id="YEAST:G3O-30107-MONOMER"/>
<dbReference type="BioGRID-ORCS" id="851473">
    <property type="hits" value="0 hits in 10 CRISPR screens"/>
</dbReference>
<dbReference type="PRO" id="PR:Q3E7B7"/>
<dbReference type="Proteomes" id="UP000002311">
    <property type="component" value="Chromosome IV"/>
</dbReference>
<dbReference type="RNAct" id="Q3E7B7">
    <property type="molecule type" value="protein"/>
</dbReference>
<dbReference type="GO" id="GO:0005737">
    <property type="term" value="C:cytoplasm"/>
    <property type="evidence" value="ECO:0007005"/>
    <property type="project" value="SGD"/>
</dbReference>
<dbReference type="GO" id="GO:0005634">
    <property type="term" value="C:nucleus"/>
    <property type="evidence" value="ECO:0007005"/>
    <property type="project" value="SGD"/>
</dbReference>
<dbReference type="InterPro" id="IPR007513">
    <property type="entry name" value="SERF-like_N"/>
</dbReference>
<dbReference type="Pfam" id="PF04419">
    <property type="entry name" value="SERF-like_N"/>
    <property type="match status" value="1"/>
</dbReference>
<protein>
    <recommendedName>
        <fullName>SERF-like protein YDL085C-A</fullName>
    </recommendedName>
</protein>
<feature type="chain" id="PRO_0000268193" description="SERF-like protein YDL085C-A">
    <location>
        <begin position="1"/>
        <end position="68"/>
    </location>
</feature>
<feature type="region of interest" description="Disordered" evidence="1">
    <location>
        <begin position="1"/>
        <end position="68"/>
    </location>
</feature>
<feature type="compositionally biased region" description="Basic and acidic residues" evidence="1">
    <location>
        <begin position="1"/>
        <end position="43"/>
    </location>
</feature>
<feature type="compositionally biased region" description="Basic and acidic residues" evidence="1">
    <location>
        <begin position="50"/>
        <end position="68"/>
    </location>
</feature>
<feature type="modified residue" description="Phosphoserine" evidence="5">
    <location>
        <position position="37"/>
    </location>
</feature>
<comment type="subcellular location">
    <subcellularLocation>
        <location evidence="2">Cytoplasm</location>
    </subcellularLocation>
    <subcellularLocation>
        <location evidence="2">Nucleus</location>
    </subcellularLocation>
</comment>
<comment type="miscellaneous">
    <text evidence="3">Present with 876 molecules/cell in log phase SD medium.</text>
</comment>
<comment type="similarity">
    <text evidence="4">Belongs to the SERF family.</text>
</comment>
<proteinExistence type="evidence at protein level"/>
<reference key="1">
    <citation type="journal article" date="1997" name="Nature">
        <title>The nucleotide sequence of Saccharomyces cerevisiae chromosome IV.</title>
        <authorList>
            <person name="Jacq C."/>
            <person name="Alt-Moerbe J."/>
            <person name="Andre B."/>
            <person name="Arnold W."/>
            <person name="Bahr A."/>
            <person name="Ballesta J.P.G."/>
            <person name="Bargues M."/>
            <person name="Baron L."/>
            <person name="Becker A."/>
            <person name="Biteau N."/>
            <person name="Bloecker H."/>
            <person name="Blugeon C."/>
            <person name="Boskovic J."/>
            <person name="Brandt P."/>
            <person name="Brueckner M."/>
            <person name="Buitrago M.J."/>
            <person name="Coster F."/>
            <person name="Delaveau T."/>
            <person name="del Rey F."/>
            <person name="Dujon B."/>
            <person name="Eide L.G."/>
            <person name="Garcia-Cantalejo J.M."/>
            <person name="Goffeau A."/>
            <person name="Gomez-Peris A."/>
            <person name="Granotier C."/>
            <person name="Hanemann V."/>
            <person name="Hankeln T."/>
            <person name="Hoheisel J.D."/>
            <person name="Jaeger W."/>
            <person name="Jimenez A."/>
            <person name="Jonniaux J.-L."/>
            <person name="Kraemer C."/>
            <person name="Kuester H."/>
            <person name="Laamanen P."/>
            <person name="Legros Y."/>
            <person name="Louis E.J."/>
            <person name="Moeller-Rieker S."/>
            <person name="Monnet A."/>
            <person name="Moro M."/>
            <person name="Mueller-Auer S."/>
            <person name="Nussbaumer B."/>
            <person name="Paricio N."/>
            <person name="Paulin L."/>
            <person name="Perea J."/>
            <person name="Perez-Alonso M."/>
            <person name="Perez-Ortin J.E."/>
            <person name="Pohl T.M."/>
            <person name="Prydz H."/>
            <person name="Purnelle B."/>
            <person name="Rasmussen S.W."/>
            <person name="Remacha M.A."/>
            <person name="Revuelta J.L."/>
            <person name="Rieger M."/>
            <person name="Salom D."/>
            <person name="Saluz H.P."/>
            <person name="Saiz J.E."/>
            <person name="Saren A.-M."/>
            <person name="Schaefer M."/>
            <person name="Scharfe M."/>
            <person name="Schmidt E.R."/>
            <person name="Schneider C."/>
            <person name="Scholler P."/>
            <person name="Schwarz S."/>
            <person name="Soler-Mira A."/>
            <person name="Urrestarazu L.A."/>
            <person name="Verhasselt P."/>
            <person name="Vissers S."/>
            <person name="Voet M."/>
            <person name="Volckaert G."/>
            <person name="Wagner G."/>
            <person name="Wambutt R."/>
            <person name="Wedler E."/>
            <person name="Wedler H."/>
            <person name="Woelfl S."/>
            <person name="Harris D.E."/>
            <person name="Bowman S."/>
            <person name="Brown D."/>
            <person name="Churcher C.M."/>
            <person name="Connor R."/>
            <person name="Dedman K."/>
            <person name="Gentles S."/>
            <person name="Hamlin N."/>
            <person name="Hunt S."/>
            <person name="Jones L."/>
            <person name="McDonald S."/>
            <person name="Murphy L.D."/>
            <person name="Niblett D."/>
            <person name="Odell C."/>
            <person name="Oliver K."/>
            <person name="Rajandream M.A."/>
            <person name="Richards C."/>
            <person name="Shore L."/>
            <person name="Walsh S.V."/>
            <person name="Barrell B.G."/>
            <person name="Dietrich F.S."/>
            <person name="Mulligan J.T."/>
            <person name="Allen E."/>
            <person name="Araujo R."/>
            <person name="Aviles E."/>
            <person name="Berno A."/>
            <person name="Carpenter J."/>
            <person name="Chen E."/>
            <person name="Cherry J.M."/>
            <person name="Chung E."/>
            <person name="Duncan M."/>
            <person name="Hunicke-Smith S."/>
            <person name="Hyman R.W."/>
            <person name="Komp C."/>
            <person name="Lashkari D."/>
            <person name="Lew H."/>
            <person name="Lin D."/>
            <person name="Mosedale D."/>
            <person name="Nakahara K."/>
            <person name="Namath A."/>
            <person name="Oefner P."/>
            <person name="Oh C."/>
            <person name="Petel F.X."/>
            <person name="Roberts D."/>
            <person name="Schramm S."/>
            <person name="Schroeder M."/>
            <person name="Shogren T."/>
            <person name="Shroff N."/>
            <person name="Winant A."/>
            <person name="Yelton M.A."/>
            <person name="Botstein D."/>
            <person name="Davis R.W."/>
            <person name="Johnston M."/>
            <person name="Andrews S."/>
            <person name="Brinkman R."/>
            <person name="Cooper J."/>
            <person name="Ding H."/>
            <person name="Du Z."/>
            <person name="Favello A."/>
            <person name="Fulton L."/>
            <person name="Gattung S."/>
            <person name="Greco T."/>
            <person name="Hallsworth K."/>
            <person name="Hawkins J."/>
            <person name="Hillier L.W."/>
            <person name="Jier M."/>
            <person name="Johnson D."/>
            <person name="Johnston L."/>
            <person name="Kirsten J."/>
            <person name="Kucaba T."/>
            <person name="Langston Y."/>
            <person name="Latreille P."/>
            <person name="Le T."/>
            <person name="Mardis E."/>
            <person name="Menezes S."/>
            <person name="Miller N."/>
            <person name="Nhan M."/>
            <person name="Pauley A."/>
            <person name="Peluso D."/>
            <person name="Rifkin L."/>
            <person name="Riles L."/>
            <person name="Taich A."/>
            <person name="Trevaskis E."/>
            <person name="Vignati D."/>
            <person name="Wilcox L."/>
            <person name="Wohldman P."/>
            <person name="Vaudin M."/>
            <person name="Wilson R."/>
            <person name="Waterston R."/>
            <person name="Albermann K."/>
            <person name="Hani J."/>
            <person name="Heumann K."/>
            <person name="Kleine K."/>
            <person name="Mewes H.-W."/>
            <person name="Zollner A."/>
            <person name="Zaccaria P."/>
        </authorList>
    </citation>
    <scope>NUCLEOTIDE SEQUENCE [LARGE SCALE GENOMIC DNA]</scope>
    <source>
        <strain>ATCC 204508 / S288c</strain>
    </source>
</reference>
<reference key="2">
    <citation type="journal article" date="2014" name="G3 (Bethesda)">
        <title>The reference genome sequence of Saccharomyces cerevisiae: Then and now.</title>
        <authorList>
            <person name="Engel S.R."/>
            <person name="Dietrich F.S."/>
            <person name="Fisk D.G."/>
            <person name="Binkley G."/>
            <person name="Balakrishnan R."/>
            <person name="Costanzo M.C."/>
            <person name="Dwight S.S."/>
            <person name="Hitz B.C."/>
            <person name="Karra K."/>
            <person name="Nash R.S."/>
            <person name="Weng S."/>
            <person name="Wong E.D."/>
            <person name="Lloyd P."/>
            <person name="Skrzypek M.S."/>
            <person name="Miyasato S.R."/>
            <person name="Simison M."/>
            <person name="Cherry J.M."/>
        </authorList>
    </citation>
    <scope>GENOME REANNOTATION</scope>
    <source>
        <strain>ATCC 204508 / S288c</strain>
    </source>
</reference>
<reference key="3">
    <citation type="journal article" date="2003" name="Nature">
        <title>Global analysis of protein localization in budding yeast.</title>
        <authorList>
            <person name="Huh W.-K."/>
            <person name="Falvo J.V."/>
            <person name="Gerke L.C."/>
            <person name="Carroll A.S."/>
            <person name="Howson R.W."/>
            <person name="Weissman J.S."/>
            <person name="O'Shea E.K."/>
        </authorList>
    </citation>
    <scope>SUBCELLULAR LOCATION [LARGE SCALE ANALYSIS]</scope>
</reference>
<reference key="4">
    <citation type="journal article" date="2003" name="Nature">
        <title>Global analysis of protein expression in yeast.</title>
        <authorList>
            <person name="Ghaemmaghami S."/>
            <person name="Huh W.-K."/>
            <person name="Bower K."/>
            <person name="Howson R.W."/>
            <person name="Belle A."/>
            <person name="Dephoure N."/>
            <person name="O'Shea E.K."/>
            <person name="Weissman J.S."/>
        </authorList>
    </citation>
    <scope>LEVEL OF PROTEIN EXPRESSION [LARGE SCALE ANALYSIS]</scope>
</reference>
<reference key="5">
    <citation type="journal article" date="2008" name="Mol. Cell. Proteomics">
        <title>A multidimensional chromatography technology for in-depth phosphoproteome analysis.</title>
        <authorList>
            <person name="Albuquerque C.P."/>
            <person name="Smolka M.B."/>
            <person name="Payne S.H."/>
            <person name="Bafna V."/>
            <person name="Eng J."/>
            <person name="Zhou H."/>
        </authorList>
    </citation>
    <scope>PHOSPHORYLATION [LARGE SCALE ANALYSIS] AT SER-37</scope>
    <scope>IDENTIFICATION BY MASS SPECTROMETRY [LARGE SCALE ANALYSIS]</scope>
</reference>
<gene>
    <name type="ordered locus">YDL085C-A</name>
</gene>
<accession>Q3E7B7</accession>
<accession>D6VRR3</accession>
<evidence type="ECO:0000256" key="1">
    <source>
        <dbReference type="SAM" id="MobiDB-lite"/>
    </source>
</evidence>
<evidence type="ECO:0000269" key="2">
    <source>
    </source>
</evidence>
<evidence type="ECO:0000269" key="3">
    <source>
    </source>
</evidence>
<evidence type="ECO:0000305" key="4"/>
<evidence type="ECO:0007744" key="5">
    <source>
    </source>
</evidence>
<organism>
    <name type="scientific">Saccharomyces cerevisiae (strain ATCC 204508 / S288c)</name>
    <name type="common">Baker's yeast</name>
    <dbReference type="NCBI Taxonomy" id="559292"/>
    <lineage>
        <taxon>Eukaryota</taxon>
        <taxon>Fungi</taxon>
        <taxon>Dikarya</taxon>
        <taxon>Ascomycota</taxon>
        <taxon>Saccharomycotina</taxon>
        <taxon>Saccharomycetes</taxon>
        <taxon>Saccharomycetales</taxon>
        <taxon>Saccharomycetaceae</taxon>
        <taxon>Saccharomyces</taxon>
    </lineage>
</organism>